<accession>Q9CJ17</accession>
<sequence>MEKEKLKKKLSLLAYRVTQENGTEAPFANEFDDFFEQGLYVDVVSGEALFTSLDKYQSGCGWPAFTQPIDKGVVKEKRDKSLFMERTEVRSSNADSHLGHVFTDGPLDKGDLRYCINSAALRFVPFDQLEAEGYGEYVKYFS</sequence>
<proteinExistence type="inferred from homology"/>
<evidence type="ECO:0000255" key="1">
    <source>
        <dbReference type="HAMAP-Rule" id="MF_01400"/>
    </source>
</evidence>
<evidence type="ECO:0000255" key="2">
    <source>
        <dbReference type="PROSITE-ProRule" id="PRU01126"/>
    </source>
</evidence>
<keyword id="KW-0560">Oxidoreductase</keyword>
<keyword id="KW-1185">Reference proteome</keyword>
<comment type="catalytic activity">
    <reaction evidence="1">
        <text>L-methionyl-[protein] + [thioredoxin]-disulfide + H2O = L-methionyl-(R)-S-oxide-[protein] + [thioredoxin]-dithiol</text>
        <dbReference type="Rhea" id="RHEA:24164"/>
        <dbReference type="Rhea" id="RHEA-COMP:10698"/>
        <dbReference type="Rhea" id="RHEA-COMP:10700"/>
        <dbReference type="Rhea" id="RHEA-COMP:12313"/>
        <dbReference type="Rhea" id="RHEA-COMP:12314"/>
        <dbReference type="ChEBI" id="CHEBI:15377"/>
        <dbReference type="ChEBI" id="CHEBI:16044"/>
        <dbReference type="ChEBI" id="CHEBI:29950"/>
        <dbReference type="ChEBI" id="CHEBI:45764"/>
        <dbReference type="ChEBI" id="CHEBI:50058"/>
        <dbReference type="EC" id="1.8.4.12"/>
    </reaction>
</comment>
<comment type="similarity">
    <text evidence="1">Belongs to the MsrB Met sulfoxide reductase family.</text>
</comment>
<protein>
    <recommendedName>
        <fullName evidence="1">Peptide methionine sulfoxide reductase MsrB</fullName>
        <ecNumber evidence="1">1.8.4.12</ecNumber>
    </recommendedName>
    <alternativeName>
        <fullName evidence="1">Peptide-methionine (R)-S-oxide reductase</fullName>
    </alternativeName>
</protein>
<dbReference type="EC" id="1.8.4.12" evidence="1"/>
<dbReference type="EMBL" id="AE005176">
    <property type="protein sequence ID" value="AAK04287.1"/>
    <property type="molecule type" value="Genomic_DNA"/>
</dbReference>
<dbReference type="PIR" id="E86648">
    <property type="entry name" value="E86648"/>
</dbReference>
<dbReference type="RefSeq" id="NP_266345.1">
    <property type="nucleotide sequence ID" value="NC_002662.1"/>
</dbReference>
<dbReference type="RefSeq" id="WP_010905188.1">
    <property type="nucleotide sequence ID" value="NC_002662.1"/>
</dbReference>
<dbReference type="SMR" id="Q9CJ17"/>
<dbReference type="PaxDb" id="272623-L192996"/>
<dbReference type="EnsemblBacteria" id="AAK04287">
    <property type="protein sequence ID" value="AAK04287"/>
    <property type="gene ID" value="L192996"/>
</dbReference>
<dbReference type="KEGG" id="lla:L192996"/>
<dbReference type="PATRIC" id="fig|272623.7.peg.210"/>
<dbReference type="eggNOG" id="COG0229">
    <property type="taxonomic scope" value="Bacteria"/>
</dbReference>
<dbReference type="HOGENOM" id="CLU_031040_8_5_9"/>
<dbReference type="OrthoDB" id="4174719at2"/>
<dbReference type="Proteomes" id="UP000002196">
    <property type="component" value="Chromosome"/>
</dbReference>
<dbReference type="GO" id="GO:0005737">
    <property type="term" value="C:cytoplasm"/>
    <property type="evidence" value="ECO:0007669"/>
    <property type="project" value="TreeGrafter"/>
</dbReference>
<dbReference type="GO" id="GO:0033743">
    <property type="term" value="F:peptide-methionine (R)-S-oxide reductase activity"/>
    <property type="evidence" value="ECO:0007669"/>
    <property type="project" value="UniProtKB-UniRule"/>
</dbReference>
<dbReference type="GO" id="GO:0030091">
    <property type="term" value="P:protein repair"/>
    <property type="evidence" value="ECO:0007669"/>
    <property type="project" value="InterPro"/>
</dbReference>
<dbReference type="GO" id="GO:0006979">
    <property type="term" value="P:response to oxidative stress"/>
    <property type="evidence" value="ECO:0007669"/>
    <property type="project" value="InterPro"/>
</dbReference>
<dbReference type="FunFam" id="2.170.150.20:FF:000003">
    <property type="entry name" value="Peptide methionine sulfoxide reductase MsrB"/>
    <property type="match status" value="1"/>
</dbReference>
<dbReference type="Gene3D" id="2.170.150.20">
    <property type="entry name" value="Peptide methionine sulfoxide reductase"/>
    <property type="match status" value="1"/>
</dbReference>
<dbReference type="HAMAP" id="MF_01400">
    <property type="entry name" value="MsrB"/>
    <property type="match status" value="1"/>
</dbReference>
<dbReference type="InterPro" id="IPR028427">
    <property type="entry name" value="Met_Sox_Rdtase_MsrB"/>
</dbReference>
<dbReference type="InterPro" id="IPR002579">
    <property type="entry name" value="Met_Sox_Rdtase_MsrB_dom"/>
</dbReference>
<dbReference type="InterPro" id="IPR011057">
    <property type="entry name" value="Mss4-like_sf"/>
</dbReference>
<dbReference type="NCBIfam" id="TIGR00357">
    <property type="entry name" value="peptide-methionine (R)-S-oxide reductase MsrB"/>
    <property type="match status" value="1"/>
</dbReference>
<dbReference type="PANTHER" id="PTHR10173">
    <property type="entry name" value="METHIONINE SULFOXIDE REDUCTASE"/>
    <property type="match status" value="1"/>
</dbReference>
<dbReference type="PANTHER" id="PTHR10173:SF59">
    <property type="entry name" value="PEPTIDE METHIONINE SULFOXIDE REDUCTASE MSRA_MSRB"/>
    <property type="match status" value="1"/>
</dbReference>
<dbReference type="Pfam" id="PF01641">
    <property type="entry name" value="SelR"/>
    <property type="match status" value="1"/>
</dbReference>
<dbReference type="SUPFAM" id="SSF51316">
    <property type="entry name" value="Mss4-like"/>
    <property type="match status" value="1"/>
</dbReference>
<dbReference type="PROSITE" id="PS51790">
    <property type="entry name" value="MSRB"/>
    <property type="match status" value="1"/>
</dbReference>
<feature type="chain" id="PRO_0000140276" description="Peptide methionine sulfoxide reductase MsrB">
    <location>
        <begin position="1"/>
        <end position="142"/>
    </location>
</feature>
<feature type="domain" description="MsrB" evidence="2">
    <location>
        <begin position="3"/>
        <end position="126"/>
    </location>
</feature>
<feature type="active site" description="Nucleophile" evidence="2">
    <location>
        <position position="115"/>
    </location>
</feature>
<reference key="1">
    <citation type="journal article" date="2001" name="Genome Res.">
        <title>The complete genome sequence of the lactic acid bacterium Lactococcus lactis ssp. lactis IL1403.</title>
        <authorList>
            <person name="Bolotin A."/>
            <person name="Wincker P."/>
            <person name="Mauger S."/>
            <person name="Jaillon O."/>
            <person name="Malarme K."/>
            <person name="Weissenbach J."/>
            <person name="Ehrlich S.D."/>
            <person name="Sorokin A."/>
        </authorList>
    </citation>
    <scope>NUCLEOTIDE SEQUENCE [LARGE SCALE GENOMIC DNA]</scope>
    <source>
        <strain>IL1403</strain>
    </source>
</reference>
<name>MSRB_LACLA</name>
<organism>
    <name type="scientific">Lactococcus lactis subsp. lactis (strain IL1403)</name>
    <name type="common">Streptococcus lactis</name>
    <dbReference type="NCBI Taxonomy" id="272623"/>
    <lineage>
        <taxon>Bacteria</taxon>
        <taxon>Bacillati</taxon>
        <taxon>Bacillota</taxon>
        <taxon>Bacilli</taxon>
        <taxon>Lactobacillales</taxon>
        <taxon>Streptococcaceae</taxon>
        <taxon>Lactococcus</taxon>
    </lineage>
</organism>
<gene>
    <name evidence="1" type="primary">msrB</name>
    <name type="synonym">ybjA</name>
    <name type="ordered locus">LL0189</name>
    <name type="ORF">L192996</name>
</gene>